<reference key="1">
    <citation type="journal article" date="1986" name="J. Biol. Chem.">
        <title>Purification and pore-forming activity of two hydrophobic polypeptides from the secretion of the Red sea moses sole (Pardachirus marmoratus).</title>
        <authorList>
            <person name="Lazarovici P."/>
            <person name="Primor N."/>
            <person name="Loew L.M."/>
        </authorList>
    </citation>
    <scope>PROTEIN SEQUENCE</scope>
    <source>
        <tissue>Skin secretion</tissue>
    </source>
</reference>
<evidence type="ECO:0000305" key="1"/>
<keyword id="KW-0903">Direct protein sequencing</keyword>
<keyword id="KW-0406">Ion transport</keyword>
<keyword id="KW-0472">Membrane</keyword>
<keyword id="KW-0964">Secreted</keyword>
<keyword id="KW-1052">Target cell membrane</keyword>
<keyword id="KW-1053">Target membrane</keyword>
<keyword id="KW-0800">Toxin</keyword>
<keyword id="KW-0812">Transmembrane</keyword>
<keyword id="KW-0813">Transport</keyword>
<protein>
    <recommendedName>
        <fullName>Pardaxin-1</fullName>
    </recommendedName>
    <alternativeName>
        <fullName>Pardaxin I</fullName>
        <shortName>PXI</shortName>
    </alternativeName>
</protein>
<sequence length="10" mass="1063">GFFALIPGIE</sequence>
<name>PAP1_PARMA</name>
<accession>P81863</accession>
<comment type="function">
    <text>Exhibits unusual shark repellent and surfactant properties. Forms voltage-dependent, ion-permeable channels in membranes. At high concentration causes cell membrane lysis. Shown to be 5-10 times more toxic, cytolytic and active in membrane pore formation than pardaxin-2.</text>
</comment>
<comment type="subunit">
    <text>Monomer. In aqueous solution exists as a tetramer.</text>
</comment>
<comment type="subcellular location">
    <subcellularLocation>
        <location>Secreted</location>
    </subcellularLocation>
    <subcellularLocation>
        <location>Target cell membrane</location>
    </subcellularLocation>
    <text>Forms a helical membrane channel in the prey.</text>
</comment>
<comment type="similarity">
    <text evidence="1">Belongs to the pardaxin family.</text>
</comment>
<feature type="peptide" id="PRO_0000045112" description="Pardaxin-1">
    <location>
        <begin position="1"/>
        <end position="10" status="greater than"/>
    </location>
</feature>
<feature type="non-terminal residue">
    <location>
        <position position="10"/>
    </location>
</feature>
<proteinExistence type="evidence at protein level"/>
<dbReference type="GO" id="GO:0005576">
    <property type="term" value="C:extracellular region"/>
    <property type="evidence" value="ECO:0007669"/>
    <property type="project" value="UniProtKB-SubCell"/>
</dbReference>
<dbReference type="GO" id="GO:0016020">
    <property type="term" value="C:membrane"/>
    <property type="evidence" value="ECO:0007669"/>
    <property type="project" value="UniProtKB-KW"/>
</dbReference>
<dbReference type="GO" id="GO:0044218">
    <property type="term" value="C:other organism cell membrane"/>
    <property type="evidence" value="ECO:0007669"/>
    <property type="project" value="UniProtKB-KW"/>
</dbReference>
<dbReference type="GO" id="GO:0090729">
    <property type="term" value="F:toxin activity"/>
    <property type="evidence" value="ECO:0007669"/>
    <property type="project" value="UniProtKB-KW"/>
</dbReference>
<dbReference type="GO" id="GO:0006811">
    <property type="term" value="P:monoatomic ion transport"/>
    <property type="evidence" value="ECO:0007669"/>
    <property type="project" value="UniProtKB-KW"/>
</dbReference>
<organism>
    <name type="scientific">Pardachirus marmoratus</name>
    <name type="common">Finless sole</name>
    <name type="synonym">Achirus marmoratus</name>
    <dbReference type="NCBI Taxonomy" id="31087"/>
    <lineage>
        <taxon>Eukaryota</taxon>
        <taxon>Metazoa</taxon>
        <taxon>Chordata</taxon>
        <taxon>Craniata</taxon>
        <taxon>Vertebrata</taxon>
        <taxon>Euteleostomi</taxon>
        <taxon>Actinopterygii</taxon>
        <taxon>Neopterygii</taxon>
        <taxon>Teleostei</taxon>
        <taxon>Neoteleostei</taxon>
        <taxon>Acanthomorphata</taxon>
        <taxon>Carangaria</taxon>
        <taxon>Pleuronectiformes</taxon>
        <taxon>Pleuronectoidei</taxon>
        <taxon>Soleidae</taxon>
        <taxon>Pardachirus</taxon>
    </lineage>
</organism>